<feature type="chain" id="PRO_1000096920" description="Protoheme IX farnesyltransferase">
    <location>
        <begin position="1"/>
        <end position="305"/>
    </location>
</feature>
<feature type="transmembrane region" description="Helical" evidence="1">
    <location>
        <begin position="28"/>
        <end position="48"/>
    </location>
</feature>
<feature type="transmembrane region" description="Helical" evidence="1">
    <location>
        <begin position="52"/>
        <end position="72"/>
    </location>
</feature>
<feature type="transmembrane region" description="Helical" evidence="1">
    <location>
        <begin position="102"/>
        <end position="122"/>
    </location>
</feature>
<feature type="transmembrane region" description="Helical" evidence="1">
    <location>
        <begin position="123"/>
        <end position="143"/>
    </location>
</feature>
<feature type="transmembrane region" description="Helical" evidence="1">
    <location>
        <begin position="150"/>
        <end position="170"/>
    </location>
</feature>
<feature type="transmembrane region" description="Helical" evidence="1">
    <location>
        <begin position="176"/>
        <end position="196"/>
    </location>
</feature>
<feature type="transmembrane region" description="Helical" evidence="1">
    <location>
        <begin position="221"/>
        <end position="241"/>
    </location>
</feature>
<feature type="transmembrane region" description="Helical" evidence="1">
    <location>
        <begin position="243"/>
        <end position="263"/>
    </location>
</feature>
<feature type="transmembrane region" description="Helical" evidence="1">
    <location>
        <begin position="282"/>
        <end position="302"/>
    </location>
</feature>
<proteinExistence type="inferred from homology"/>
<gene>
    <name evidence="1" type="primary">cyoE</name>
    <name type="ordered locus">CbuG_1011</name>
</gene>
<name>CYOE_COXB2</name>
<comment type="function">
    <text evidence="1">Converts heme B (protoheme IX) to heme O by substitution of the vinyl group on carbon 2 of heme B porphyrin ring with a hydroxyethyl farnesyl side group.</text>
</comment>
<comment type="catalytic activity">
    <reaction evidence="1">
        <text>heme b + (2E,6E)-farnesyl diphosphate + H2O = Fe(II)-heme o + diphosphate</text>
        <dbReference type="Rhea" id="RHEA:28070"/>
        <dbReference type="ChEBI" id="CHEBI:15377"/>
        <dbReference type="ChEBI" id="CHEBI:33019"/>
        <dbReference type="ChEBI" id="CHEBI:60344"/>
        <dbReference type="ChEBI" id="CHEBI:60530"/>
        <dbReference type="ChEBI" id="CHEBI:175763"/>
        <dbReference type="EC" id="2.5.1.141"/>
    </reaction>
</comment>
<comment type="pathway">
    <text evidence="1">Porphyrin-containing compound metabolism; heme O biosynthesis; heme O from protoheme: step 1/1.</text>
</comment>
<comment type="subcellular location">
    <subcellularLocation>
        <location evidence="1">Cell inner membrane</location>
        <topology evidence="1">Multi-pass membrane protein</topology>
    </subcellularLocation>
</comment>
<comment type="miscellaneous">
    <text evidence="1">Carbon 2 of the heme B porphyrin ring is defined according to the Fischer nomenclature.</text>
</comment>
<comment type="similarity">
    <text evidence="1">Belongs to the UbiA prenyltransferase family. Protoheme IX farnesyltransferase subfamily.</text>
</comment>
<organism>
    <name type="scientific">Coxiella burnetii (strain CbuG_Q212)</name>
    <name type="common">Coxiella burnetii (strain Q212)</name>
    <dbReference type="NCBI Taxonomy" id="434923"/>
    <lineage>
        <taxon>Bacteria</taxon>
        <taxon>Pseudomonadati</taxon>
        <taxon>Pseudomonadota</taxon>
        <taxon>Gammaproteobacteria</taxon>
        <taxon>Legionellales</taxon>
        <taxon>Coxiellaceae</taxon>
        <taxon>Coxiella</taxon>
    </lineage>
</organism>
<evidence type="ECO:0000255" key="1">
    <source>
        <dbReference type="HAMAP-Rule" id="MF_00154"/>
    </source>
</evidence>
<keyword id="KW-0997">Cell inner membrane</keyword>
<keyword id="KW-1003">Cell membrane</keyword>
<keyword id="KW-0350">Heme biosynthesis</keyword>
<keyword id="KW-0472">Membrane</keyword>
<keyword id="KW-0808">Transferase</keyword>
<keyword id="KW-0812">Transmembrane</keyword>
<keyword id="KW-1133">Transmembrane helix</keyword>
<reference key="1">
    <citation type="journal article" date="2009" name="Infect. Immun.">
        <title>Comparative genomics reveal extensive transposon-mediated genomic plasticity and diversity among potential effector proteins within the genus Coxiella.</title>
        <authorList>
            <person name="Beare P.A."/>
            <person name="Unsworth N."/>
            <person name="Andoh M."/>
            <person name="Voth D.E."/>
            <person name="Omsland A."/>
            <person name="Gilk S.D."/>
            <person name="Williams K.P."/>
            <person name="Sobral B.W."/>
            <person name="Kupko J.J. III"/>
            <person name="Porcella S.F."/>
            <person name="Samuel J.E."/>
            <person name="Heinzen R.A."/>
        </authorList>
    </citation>
    <scope>NUCLEOTIDE SEQUENCE [LARGE SCALE GENOMIC DNA]</scope>
    <source>
        <strain>CbuG_Q212</strain>
    </source>
</reference>
<protein>
    <recommendedName>
        <fullName evidence="1">Protoheme IX farnesyltransferase</fullName>
        <ecNumber evidence="1">2.5.1.141</ecNumber>
    </recommendedName>
    <alternativeName>
        <fullName evidence="1">Heme B farnesyltransferase</fullName>
    </alternativeName>
    <alternativeName>
        <fullName evidence="1">Heme O synthase</fullName>
    </alternativeName>
</protein>
<dbReference type="EC" id="2.5.1.141" evidence="1"/>
<dbReference type="EMBL" id="CP001019">
    <property type="protein sequence ID" value="ACJ18363.1"/>
    <property type="molecule type" value="Genomic_DNA"/>
</dbReference>
<dbReference type="RefSeq" id="WP_005768584.1">
    <property type="nucleotide sequence ID" value="NC_011527.1"/>
</dbReference>
<dbReference type="SMR" id="B6J085"/>
<dbReference type="KEGG" id="cbg:CbuG_1011"/>
<dbReference type="HOGENOM" id="CLU_029631_0_2_6"/>
<dbReference type="UniPathway" id="UPA00834">
    <property type="reaction ID" value="UER00712"/>
</dbReference>
<dbReference type="GO" id="GO:0005886">
    <property type="term" value="C:plasma membrane"/>
    <property type="evidence" value="ECO:0007669"/>
    <property type="project" value="UniProtKB-SubCell"/>
</dbReference>
<dbReference type="GO" id="GO:0008495">
    <property type="term" value="F:protoheme IX farnesyltransferase activity"/>
    <property type="evidence" value="ECO:0007669"/>
    <property type="project" value="UniProtKB-UniRule"/>
</dbReference>
<dbReference type="GO" id="GO:0048034">
    <property type="term" value="P:heme O biosynthetic process"/>
    <property type="evidence" value="ECO:0007669"/>
    <property type="project" value="UniProtKB-UniRule"/>
</dbReference>
<dbReference type="CDD" id="cd13957">
    <property type="entry name" value="PT_UbiA_Cox10"/>
    <property type="match status" value="1"/>
</dbReference>
<dbReference type="FunFam" id="1.10.357.140:FF:000001">
    <property type="entry name" value="Protoheme IX farnesyltransferase"/>
    <property type="match status" value="1"/>
</dbReference>
<dbReference type="Gene3D" id="1.10.357.140">
    <property type="entry name" value="UbiA prenyltransferase"/>
    <property type="match status" value="1"/>
</dbReference>
<dbReference type="HAMAP" id="MF_00154">
    <property type="entry name" value="CyoE_CtaB"/>
    <property type="match status" value="1"/>
</dbReference>
<dbReference type="InterPro" id="IPR006369">
    <property type="entry name" value="Protohaem_IX_farnesylTrfase"/>
</dbReference>
<dbReference type="InterPro" id="IPR000537">
    <property type="entry name" value="UbiA_prenyltransferase"/>
</dbReference>
<dbReference type="InterPro" id="IPR030470">
    <property type="entry name" value="UbiA_prenylTrfase_CS"/>
</dbReference>
<dbReference type="InterPro" id="IPR044878">
    <property type="entry name" value="UbiA_sf"/>
</dbReference>
<dbReference type="NCBIfam" id="TIGR01473">
    <property type="entry name" value="cyoE_ctaB"/>
    <property type="match status" value="1"/>
</dbReference>
<dbReference type="NCBIfam" id="NF003349">
    <property type="entry name" value="PRK04375.1-2"/>
    <property type="match status" value="1"/>
</dbReference>
<dbReference type="PANTHER" id="PTHR43448:SF7">
    <property type="entry name" value="4-HYDROXYBENZOATE SOLANESYLTRANSFERASE"/>
    <property type="match status" value="1"/>
</dbReference>
<dbReference type="PANTHER" id="PTHR43448">
    <property type="entry name" value="PROTOHEME IX FARNESYLTRANSFERASE, MITOCHONDRIAL"/>
    <property type="match status" value="1"/>
</dbReference>
<dbReference type="Pfam" id="PF01040">
    <property type="entry name" value="UbiA"/>
    <property type="match status" value="1"/>
</dbReference>
<dbReference type="PROSITE" id="PS00943">
    <property type="entry name" value="UBIA"/>
    <property type="match status" value="1"/>
</dbReference>
<sequence length="305" mass="34456">MRTRTEIVSTTQTSATWRDYFQLCKPRVVLLMLLTAIVGMCLASPGIVSWRVFLFGNLGIALAASSAAAINHLLEHHLDKLMRRTYRRPIVQGKINRKNAAIFAAILCILSMIILIAFVNLLTALLTFITLIGYAGFYTLYLKHATPQNIVIGGLAGAAPPLLGWVAVTGHIDPPALILLLIIFLWTPPHFWALAIHRIDDYAKANIPMLPNTHGIIYTKINILLYTLLLTAISFLPFVIMTSGWIYFSSVCLLNLGFLYWAIRLLTSQRKEIPMRTFQYSIWYLMLLFTALLVDHYVYLALKLY</sequence>
<accession>B6J085</accession>